<feature type="chain" id="PRO_0000342545" description="Large ribosomal subunit protein uL2cz/uL2cy">
    <location>
        <begin position="1"/>
        <end position="273"/>
    </location>
</feature>
<feature type="region of interest" description="Disordered" evidence="3">
    <location>
        <begin position="1"/>
        <end position="23"/>
    </location>
</feature>
<feature type="region of interest" description="Disordered" evidence="3">
    <location>
        <begin position="223"/>
        <end position="273"/>
    </location>
</feature>
<evidence type="ECO:0000250" key="1"/>
<evidence type="ECO:0000255" key="2">
    <source>
        <dbReference type="HAMAP-Rule" id="MF_01320"/>
    </source>
</evidence>
<evidence type="ECO:0000256" key="3">
    <source>
        <dbReference type="SAM" id="MobiDB-lite"/>
    </source>
</evidence>
<evidence type="ECO:0000305" key="4"/>
<organism>
    <name type="scientific">Oenothera biennis</name>
    <name type="common">German evening primrose</name>
    <name type="synonym">Onagra biennis</name>
    <dbReference type="NCBI Taxonomy" id="3942"/>
    <lineage>
        <taxon>Eukaryota</taxon>
        <taxon>Viridiplantae</taxon>
        <taxon>Streptophyta</taxon>
        <taxon>Embryophyta</taxon>
        <taxon>Tracheophyta</taxon>
        <taxon>Spermatophyta</taxon>
        <taxon>Magnoliopsida</taxon>
        <taxon>eudicotyledons</taxon>
        <taxon>Gunneridae</taxon>
        <taxon>Pentapetalae</taxon>
        <taxon>rosids</taxon>
        <taxon>malvids</taxon>
        <taxon>Myrtales</taxon>
        <taxon>Onagraceae</taxon>
        <taxon>Onagroideae</taxon>
        <taxon>Onagreae</taxon>
        <taxon>Oenothera</taxon>
    </lineage>
</organism>
<dbReference type="EMBL" id="EU262889">
    <property type="protein sequence ID" value="ABW98913.1"/>
    <property type="molecule type" value="Genomic_DNA"/>
</dbReference>
<dbReference type="EMBL" id="EU262889">
    <property type="protein sequence ID" value="ABW98934.1"/>
    <property type="molecule type" value="Genomic_DNA"/>
</dbReference>
<dbReference type="SMR" id="B0Z501"/>
<dbReference type="GO" id="GO:0009507">
    <property type="term" value="C:chloroplast"/>
    <property type="evidence" value="ECO:0007669"/>
    <property type="project" value="UniProtKB-SubCell"/>
</dbReference>
<dbReference type="GO" id="GO:0005762">
    <property type="term" value="C:mitochondrial large ribosomal subunit"/>
    <property type="evidence" value="ECO:0007669"/>
    <property type="project" value="TreeGrafter"/>
</dbReference>
<dbReference type="GO" id="GO:0019843">
    <property type="term" value="F:rRNA binding"/>
    <property type="evidence" value="ECO:0007669"/>
    <property type="project" value="UniProtKB-UniRule"/>
</dbReference>
<dbReference type="GO" id="GO:0003735">
    <property type="term" value="F:structural constituent of ribosome"/>
    <property type="evidence" value="ECO:0007669"/>
    <property type="project" value="InterPro"/>
</dbReference>
<dbReference type="GO" id="GO:0016740">
    <property type="term" value="F:transferase activity"/>
    <property type="evidence" value="ECO:0007669"/>
    <property type="project" value="InterPro"/>
</dbReference>
<dbReference type="GO" id="GO:0032543">
    <property type="term" value="P:mitochondrial translation"/>
    <property type="evidence" value="ECO:0007669"/>
    <property type="project" value="TreeGrafter"/>
</dbReference>
<dbReference type="FunFam" id="4.10.950.10:FF:000001">
    <property type="entry name" value="50S ribosomal protein L2"/>
    <property type="match status" value="1"/>
</dbReference>
<dbReference type="FunFam" id="2.30.30.30:FF:000008">
    <property type="entry name" value="50S ribosomal protein L2, chloroplastic"/>
    <property type="match status" value="1"/>
</dbReference>
<dbReference type="FunFam" id="2.40.50.140:FF:000029">
    <property type="entry name" value="50S ribosomal protein L2, chloroplastic"/>
    <property type="match status" value="1"/>
</dbReference>
<dbReference type="Gene3D" id="2.30.30.30">
    <property type="match status" value="1"/>
</dbReference>
<dbReference type="Gene3D" id="2.40.50.140">
    <property type="entry name" value="Nucleic acid-binding proteins"/>
    <property type="match status" value="1"/>
</dbReference>
<dbReference type="Gene3D" id="4.10.950.10">
    <property type="entry name" value="Ribosomal protein L2, domain 3"/>
    <property type="match status" value="1"/>
</dbReference>
<dbReference type="HAMAP" id="MF_01320_B">
    <property type="entry name" value="Ribosomal_uL2_B"/>
    <property type="match status" value="1"/>
</dbReference>
<dbReference type="InterPro" id="IPR012340">
    <property type="entry name" value="NA-bd_OB-fold"/>
</dbReference>
<dbReference type="InterPro" id="IPR014722">
    <property type="entry name" value="Rib_uL2_dom2"/>
</dbReference>
<dbReference type="InterPro" id="IPR002171">
    <property type="entry name" value="Ribosomal_uL2"/>
</dbReference>
<dbReference type="InterPro" id="IPR005880">
    <property type="entry name" value="Ribosomal_uL2_bac/org-type"/>
</dbReference>
<dbReference type="InterPro" id="IPR022669">
    <property type="entry name" value="Ribosomal_uL2_C"/>
</dbReference>
<dbReference type="InterPro" id="IPR022671">
    <property type="entry name" value="Ribosomal_uL2_CS"/>
</dbReference>
<dbReference type="InterPro" id="IPR014726">
    <property type="entry name" value="Ribosomal_uL2_dom3"/>
</dbReference>
<dbReference type="InterPro" id="IPR022666">
    <property type="entry name" value="Ribosomal_uL2_RNA-bd_dom"/>
</dbReference>
<dbReference type="InterPro" id="IPR008991">
    <property type="entry name" value="Translation_prot_SH3-like_sf"/>
</dbReference>
<dbReference type="NCBIfam" id="TIGR01171">
    <property type="entry name" value="rplB_bact"/>
    <property type="match status" value="1"/>
</dbReference>
<dbReference type="PANTHER" id="PTHR13691:SF5">
    <property type="entry name" value="LARGE RIBOSOMAL SUBUNIT PROTEIN UL2M"/>
    <property type="match status" value="1"/>
</dbReference>
<dbReference type="PANTHER" id="PTHR13691">
    <property type="entry name" value="RIBOSOMAL PROTEIN L2"/>
    <property type="match status" value="1"/>
</dbReference>
<dbReference type="Pfam" id="PF00181">
    <property type="entry name" value="Ribosomal_L2"/>
    <property type="match status" value="1"/>
</dbReference>
<dbReference type="Pfam" id="PF03947">
    <property type="entry name" value="Ribosomal_L2_C"/>
    <property type="match status" value="1"/>
</dbReference>
<dbReference type="PIRSF" id="PIRSF002158">
    <property type="entry name" value="Ribosomal_L2"/>
    <property type="match status" value="1"/>
</dbReference>
<dbReference type="SMART" id="SM01383">
    <property type="entry name" value="Ribosomal_L2"/>
    <property type="match status" value="1"/>
</dbReference>
<dbReference type="SMART" id="SM01382">
    <property type="entry name" value="Ribosomal_L2_C"/>
    <property type="match status" value="1"/>
</dbReference>
<dbReference type="SUPFAM" id="SSF50249">
    <property type="entry name" value="Nucleic acid-binding proteins"/>
    <property type="match status" value="1"/>
</dbReference>
<dbReference type="SUPFAM" id="SSF50104">
    <property type="entry name" value="Translation proteins SH3-like domain"/>
    <property type="match status" value="1"/>
</dbReference>
<dbReference type="PROSITE" id="PS00467">
    <property type="entry name" value="RIBOSOMAL_L2"/>
    <property type="match status" value="1"/>
</dbReference>
<gene>
    <name type="primary">rpl2-A</name>
</gene>
<gene>
    <name type="primary">rpl2-B</name>
</gene>
<name>RK2_OENBI</name>
<keyword id="KW-0150">Chloroplast</keyword>
<keyword id="KW-0934">Plastid</keyword>
<keyword id="KW-0687">Ribonucleoprotein</keyword>
<keyword id="KW-0689">Ribosomal protein</keyword>
<comment type="subunit">
    <text evidence="1">Part of the 50S ribosomal subunit.</text>
</comment>
<comment type="subcellular location">
    <subcellularLocation>
        <location>Plastid</location>
        <location>Chloroplast</location>
    </subcellularLocation>
</comment>
<comment type="similarity">
    <text evidence="4">Belongs to the universal ribosomal protein uL2 family.</text>
</comment>
<protein>
    <recommendedName>
        <fullName evidence="2">Large ribosomal subunit protein uL2cz/uL2cy</fullName>
    </recommendedName>
    <alternativeName>
        <fullName evidence="4">50S ribosomal protein L2, chloroplastic</fullName>
    </alternativeName>
</protein>
<geneLocation type="chloroplast"/>
<reference key="1">
    <citation type="journal article" date="2008" name="Nucleic Acids Res.">
        <title>The complete nucleotide sequences of the five genetically distinct plastid genomes of Oenothera, subsection Oenothera: I. Sequence evaluation and plastome evolution.</title>
        <authorList>
            <person name="Greiner S."/>
            <person name="Wang X."/>
            <person name="Rauwolf U."/>
            <person name="Silber M.V."/>
            <person name="Mayer K."/>
            <person name="Meurer J."/>
            <person name="Haberer G."/>
            <person name="Herrmann R.G."/>
        </authorList>
    </citation>
    <scope>NUCLEOTIDE SEQUENCE [LARGE SCALE GENOMIC DNA]</scope>
    <source>
        <strain>cv. Suaveolens Grado</strain>
    </source>
</reference>
<proteinExistence type="inferred from homology"/>
<sequence length="273" mass="29728">MAIHLYKTSTPSTRNGAVDSQVKSNTRKNLIYGQPRCSKGRNARGIITAGHRGGGHKRLYRKIDFRRNERDIYGRIVSIEYDPNRNASICLIHYGDGEKRYILHPRGAIIGDTIVSGTEVPIKMGNALPLKMPLGTALHNIEITLGKGGQLARAAGAVAKLIAKEGKSATLKLPSGEVRLISNNCSATVGQVGNVGVNQKSLGRAGSKRWLGKRPVVRGVVMNPVDHPHGGGEGRAPIGRKKPATPWGYPALGRRSRKRNKYSENLILRRRSK</sequence>
<accession>B0Z501</accession>